<feature type="signal peptide" evidence="1">
    <location>
        <begin position="1"/>
        <end position="22"/>
    </location>
</feature>
<feature type="chain" id="PRO_0000002027" description="Proapolipoprotein C-II">
    <location>
        <begin position="23"/>
        <end position="101"/>
    </location>
</feature>
<feature type="chain" id="PRO_0000430844" description="Apolipoprotein C-II" evidence="2">
    <location>
        <begin position="29"/>
        <end position="101"/>
    </location>
</feature>
<feature type="region of interest" description="Lipid binding" evidence="2">
    <location>
        <begin position="66"/>
        <end position="74"/>
    </location>
</feature>
<feature type="region of interest" description="Lipoprotein lipase cofactor" evidence="2">
    <location>
        <begin position="78"/>
        <end position="101"/>
    </location>
</feature>
<gene>
    <name type="primary">APOC2</name>
</gene>
<organism>
    <name type="scientific">Tupaia glis</name>
    <name type="common">Common tree shrew</name>
    <name type="synonym">Sorex glis</name>
    <dbReference type="NCBI Taxonomy" id="9395"/>
    <lineage>
        <taxon>Eukaryota</taxon>
        <taxon>Metazoa</taxon>
        <taxon>Chordata</taxon>
        <taxon>Craniata</taxon>
        <taxon>Vertebrata</taxon>
        <taxon>Euteleostomi</taxon>
        <taxon>Mammalia</taxon>
        <taxon>Eutheria</taxon>
        <taxon>Euarchontoglires</taxon>
        <taxon>Scandentia</taxon>
        <taxon>Tupaiidae</taxon>
        <taxon>Tupaia</taxon>
    </lineage>
</organism>
<dbReference type="EMBL" id="AF335585">
    <property type="protein sequence ID" value="AAK08100.1"/>
    <property type="molecule type" value="mRNA"/>
</dbReference>
<dbReference type="SMR" id="Q9BG58"/>
<dbReference type="GO" id="GO:0042627">
    <property type="term" value="C:chylomicron"/>
    <property type="evidence" value="ECO:0007669"/>
    <property type="project" value="UniProtKB-KW"/>
</dbReference>
<dbReference type="GO" id="GO:0034364">
    <property type="term" value="C:high-density lipoprotein particle"/>
    <property type="evidence" value="ECO:0007669"/>
    <property type="project" value="UniProtKB-KW"/>
</dbReference>
<dbReference type="GO" id="GO:0034362">
    <property type="term" value="C:low-density lipoprotein particle"/>
    <property type="evidence" value="ECO:0007669"/>
    <property type="project" value="UniProtKB-KW"/>
</dbReference>
<dbReference type="GO" id="GO:0034361">
    <property type="term" value="C:very-low-density lipoprotein particle"/>
    <property type="evidence" value="ECO:0007669"/>
    <property type="project" value="UniProtKB-KW"/>
</dbReference>
<dbReference type="GO" id="GO:0016004">
    <property type="term" value="F:phospholipase activator activity"/>
    <property type="evidence" value="ECO:0007669"/>
    <property type="project" value="TreeGrafter"/>
</dbReference>
<dbReference type="GO" id="GO:0043274">
    <property type="term" value="F:phospholipase binding"/>
    <property type="evidence" value="ECO:0007669"/>
    <property type="project" value="TreeGrafter"/>
</dbReference>
<dbReference type="GO" id="GO:0016042">
    <property type="term" value="P:lipid catabolic process"/>
    <property type="evidence" value="ECO:0007669"/>
    <property type="project" value="UniProtKB-KW"/>
</dbReference>
<dbReference type="GO" id="GO:0006869">
    <property type="term" value="P:lipid transport"/>
    <property type="evidence" value="ECO:0007669"/>
    <property type="project" value="UniProtKB-KW"/>
</dbReference>
<dbReference type="GO" id="GO:0060697">
    <property type="term" value="P:positive regulation of phospholipid catabolic process"/>
    <property type="evidence" value="ECO:0007669"/>
    <property type="project" value="TreeGrafter"/>
</dbReference>
<dbReference type="FunFam" id="1.10.1440.10:FF:000001">
    <property type="entry name" value="Apolipoprotein C-II"/>
    <property type="match status" value="1"/>
</dbReference>
<dbReference type="Gene3D" id="1.10.1440.10">
    <property type="entry name" value="Apolipoprotein C-II"/>
    <property type="match status" value="1"/>
</dbReference>
<dbReference type="InterPro" id="IPR008019">
    <property type="entry name" value="Apo-CII"/>
</dbReference>
<dbReference type="InterPro" id="IPR023121">
    <property type="entry name" value="ApoC-II_dom_sf"/>
</dbReference>
<dbReference type="PANTHER" id="PTHR16566">
    <property type="entry name" value="APOLIPOPROTEIN C-II"/>
    <property type="match status" value="1"/>
</dbReference>
<dbReference type="PANTHER" id="PTHR16566:SF0">
    <property type="entry name" value="APOLIPOPROTEIN C-II"/>
    <property type="match status" value="1"/>
</dbReference>
<dbReference type="Pfam" id="PF05355">
    <property type="entry name" value="Apo-CII"/>
    <property type="match status" value="1"/>
</dbReference>
<comment type="function">
    <text evidence="2">Component of chylomicrons, very low-density lipoproteins (VLDL), low-density lipoproteins (LDL), and high-density lipoproteins (HDL) in plasma. Plays an important role in lipoprotein metabolism as an activator of lipoprotein lipase. Both proapolipoprotein C-II and apolipoprotein C-II can activate lipoprotein lipase.</text>
</comment>
<comment type="subcellular location">
    <subcellularLocation>
        <location evidence="2">Secreted</location>
    </subcellularLocation>
</comment>
<comment type="PTM">
    <text evidence="2">Proapolipoprotein C-II is synthesized as a sialic acid containing glycoprotein which is subsequently desialylated prior to its proteolytic processing.</text>
</comment>
<comment type="PTM">
    <text evidence="2">Proapolipoprotein C-II, the major form found in plasma undergoes proteolytic cleavage of its N-terminal hexapeptide to generate apolipoprotein C-II, which occurs as the minor form in plasma.</text>
</comment>
<comment type="similarity">
    <text evidence="3">Belongs to the apolipoprotein C2 family.</text>
</comment>
<evidence type="ECO:0000250" key="1"/>
<evidence type="ECO:0000250" key="2">
    <source>
        <dbReference type="UniProtKB" id="P02655"/>
    </source>
</evidence>
<evidence type="ECO:0000305" key="3"/>
<sequence>MGTRFLLALFLVLLVLGLEVQADPESRQDEPASPALLAQMRESFSSYWDSAKAAAQDLYQKTYLPAVDERIRDMYSKSTAAVTTYAGIFTDQLFSMLKGEQ</sequence>
<proteinExistence type="inferred from homology"/>
<keyword id="KW-0162">Chylomicron</keyword>
<keyword id="KW-0325">Glycoprotein</keyword>
<keyword id="KW-0345">HDL</keyword>
<keyword id="KW-0427">LDL</keyword>
<keyword id="KW-0442">Lipid degradation</keyword>
<keyword id="KW-0443">Lipid metabolism</keyword>
<keyword id="KW-0445">Lipid transport</keyword>
<keyword id="KW-0964">Secreted</keyword>
<keyword id="KW-0730">Sialic acid</keyword>
<keyword id="KW-0732">Signal</keyword>
<keyword id="KW-0813">Transport</keyword>
<keyword id="KW-0850">VLDL</keyword>
<accession>Q9BG58</accession>
<reference key="1">
    <citation type="submission" date="2001-01" db="EMBL/GenBank/DDBJ databases">
        <title>Cloning and sequencing of tree shrew apolipoprotein CII cDNA.</title>
        <authorList>
            <person name="Zeng W.W."/>
            <person name="Zhang W.C."/>
            <person name="Zhang J."/>
            <person name="Chen B.S."/>
            <person name="Wu G."/>
            <person name="Bai L."/>
            <person name="Xue H."/>
        </authorList>
    </citation>
    <scope>NUCLEOTIDE SEQUENCE [MRNA]</scope>
    <source>
        <tissue>Liver</tissue>
    </source>
</reference>
<name>APOC2_TUPGL</name>
<protein>
    <recommendedName>
        <fullName>Apolipoprotein C-II</fullName>
        <shortName>Apo-CII</shortName>
        <shortName>ApoC-II</shortName>
    </recommendedName>
    <alternativeName>
        <fullName>Apolipoprotein C2</fullName>
    </alternativeName>
    <component>
        <recommendedName>
            <fullName>Proapolipoprotein C-II</fullName>
            <shortName>ProapoC-II</shortName>
        </recommendedName>
    </component>
</protein>